<reference key="1">
    <citation type="journal article" date="2000" name="Nature">
        <title>Sequence and analysis of chromosome 5 of the plant Arabidopsis thaliana.</title>
        <authorList>
            <person name="Tabata S."/>
            <person name="Kaneko T."/>
            <person name="Nakamura Y."/>
            <person name="Kotani H."/>
            <person name="Kato T."/>
            <person name="Asamizu E."/>
            <person name="Miyajima N."/>
            <person name="Sasamoto S."/>
            <person name="Kimura T."/>
            <person name="Hosouchi T."/>
            <person name="Kawashima K."/>
            <person name="Kohara M."/>
            <person name="Matsumoto M."/>
            <person name="Matsuno A."/>
            <person name="Muraki A."/>
            <person name="Nakayama S."/>
            <person name="Nakazaki N."/>
            <person name="Naruo K."/>
            <person name="Okumura S."/>
            <person name="Shinpo S."/>
            <person name="Takeuchi C."/>
            <person name="Wada T."/>
            <person name="Watanabe A."/>
            <person name="Yamada M."/>
            <person name="Yasuda M."/>
            <person name="Sato S."/>
            <person name="de la Bastide M."/>
            <person name="Huang E."/>
            <person name="Spiegel L."/>
            <person name="Gnoj L."/>
            <person name="O'Shaughnessy A."/>
            <person name="Preston R."/>
            <person name="Habermann K."/>
            <person name="Murray J."/>
            <person name="Johnson D."/>
            <person name="Rohlfing T."/>
            <person name="Nelson J."/>
            <person name="Stoneking T."/>
            <person name="Pepin K."/>
            <person name="Spieth J."/>
            <person name="Sekhon M."/>
            <person name="Armstrong J."/>
            <person name="Becker M."/>
            <person name="Belter E."/>
            <person name="Cordum H."/>
            <person name="Cordes M."/>
            <person name="Courtney L."/>
            <person name="Courtney W."/>
            <person name="Dante M."/>
            <person name="Du H."/>
            <person name="Edwards J."/>
            <person name="Fryman J."/>
            <person name="Haakensen B."/>
            <person name="Lamar E."/>
            <person name="Latreille P."/>
            <person name="Leonard S."/>
            <person name="Meyer R."/>
            <person name="Mulvaney E."/>
            <person name="Ozersky P."/>
            <person name="Riley A."/>
            <person name="Strowmatt C."/>
            <person name="Wagner-McPherson C."/>
            <person name="Wollam A."/>
            <person name="Yoakum M."/>
            <person name="Bell M."/>
            <person name="Dedhia N."/>
            <person name="Parnell L."/>
            <person name="Shah R."/>
            <person name="Rodriguez M."/>
            <person name="Hoon See L."/>
            <person name="Vil D."/>
            <person name="Baker J."/>
            <person name="Kirchoff K."/>
            <person name="Toth K."/>
            <person name="King L."/>
            <person name="Bahret A."/>
            <person name="Miller B."/>
            <person name="Marra M.A."/>
            <person name="Martienssen R."/>
            <person name="McCombie W.R."/>
            <person name="Wilson R.K."/>
            <person name="Murphy G."/>
            <person name="Bancroft I."/>
            <person name="Volckaert G."/>
            <person name="Wambutt R."/>
            <person name="Duesterhoeft A."/>
            <person name="Stiekema W."/>
            <person name="Pohl T."/>
            <person name="Entian K.-D."/>
            <person name="Terryn N."/>
            <person name="Hartley N."/>
            <person name="Bent E."/>
            <person name="Johnson S."/>
            <person name="Langham S.-A."/>
            <person name="McCullagh B."/>
            <person name="Robben J."/>
            <person name="Grymonprez B."/>
            <person name="Zimmermann W."/>
            <person name="Ramsperger U."/>
            <person name="Wedler H."/>
            <person name="Balke K."/>
            <person name="Wedler E."/>
            <person name="Peters S."/>
            <person name="van Staveren M."/>
            <person name="Dirkse W."/>
            <person name="Mooijman P."/>
            <person name="Klein Lankhorst R."/>
            <person name="Weitzenegger T."/>
            <person name="Bothe G."/>
            <person name="Rose M."/>
            <person name="Hauf J."/>
            <person name="Berneiser S."/>
            <person name="Hempel S."/>
            <person name="Feldpausch M."/>
            <person name="Lamberth S."/>
            <person name="Villarroel R."/>
            <person name="Gielen J."/>
            <person name="Ardiles W."/>
            <person name="Bents O."/>
            <person name="Lemcke K."/>
            <person name="Kolesov G."/>
            <person name="Mayer K.F.X."/>
            <person name="Rudd S."/>
            <person name="Schoof H."/>
            <person name="Schueller C."/>
            <person name="Zaccaria P."/>
            <person name="Mewes H.-W."/>
            <person name="Bevan M."/>
            <person name="Fransz P.F."/>
        </authorList>
    </citation>
    <scope>NUCLEOTIDE SEQUENCE [LARGE SCALE GENOMIC DNA]</scope>
    <source>
        <strain>cv. Columbia</strain>
    </source>
</reference>
<reference key="2">
    <citation type="journal article" date="2017" name="Plant J.">
        <title>Araport11: a complete reannotation of the Arabidopsis thaliana reference genome.</title>
        <authorList>
            <person name="Cheng C.Y."/>
            <person name="Krishnakumar V."/>
            <person name="Chan A.P."/>
            <person name="Thibaud-Nissen F."/>
            <person name="Schobel S."/>
            <person name="Town C.D."/>
        </authorList>
    </citation>
    <scope>GENOME REANNOTATION</scope>
    <source>
        <strain>cv. Columbia</strain>
    </source>
</reference>
<reference key="3">
    <citation type="journal article" date="2006" name="Plant Biotechnol. J.">
        <title>Simultaneous high-throughput recombinational cloning of open reading frames in closed and open configurations.</title>
        <authorList>
            <person name="Underwood B.A."/>
            <person name="Vanderhaeghen R."/>
            <person name="Whitford R."/>
            <person name="Town C.D."/>
            <person name="Hilson P."/>
        </authorList>
    </citation>
    <scope>NUCLEOTIDE SEQUENCE [LARGE SCALE MRNA]</scope>
    <source>
        <strain>cv. Columbia</strain>
    </source>
</reference>
<reference key="4">
    <citation type="submission" date="2006-03" db="EMBL/GenBank/DDBJ databases">
        <title>Arabidopsis ORF clones.</title>
        <authorList>
            <person name="Kim C.J."/>
            <person name="Chen H."/>
            <person name="Shinn P."/>
            <person name="Ecker J.R."/>
        </authorList>
    </citation>
    <scope>NUCLEOTIDE SEQUENCE [LARGE SCALE MRNA]</scope>
    <source>
        <strain>cv. Columbia</strain>
    </source>
</reference>
<reference key="5">
    <citation type="submission" date="2002-03" db="EMBL/GenBank/DDBJ databases">
        <title>Full-length cDNA from Arabidopsis thaliana.</title>
        <authorList>
            <person name="Brover V.V."/>
            <person name="Troukhan M.E."/>
            <person name="Alexandrov N.A."/>
            <person name="Lu Y.-P."/>
            <person name="Flavell R.B."/>
            <person name="Feldmann K.A."/>
        </authorList>
    </citation>
    <scope>NUCLEOTIDE SEQUENCE [LARGE SCALE MRNA]</scope>
</reference>
<reference key="6">
    <citation type="journal article" date="2004" name="Plant Physiol.">
        <title>The GATA family of transcription factors in Arabidopsis and rice.</title>
        <authorList>
            <person name="Reyes J.C."/>
            <person name="Muro-Pastor M.I."/>
            <person name="Florencio F.J."/>
        </authorList>
    </citation>
    <scope>GENE FAMILY ORGANIZATION</scope>
</reference>
<name>GAT23_ARATH</name>
<protein>
    <recommendedName>
        <fullName>GATA transcription factor 23</fullName>
    </recommendedName>
</protein>
<feature type="chain" id="PRO_0000083451" description="GATA transcription factor 23">
    <location>
        <begin position="1"/>
        <end position="120"/>
    </location>
</feature>
<feature type="zinc finger region" description="GATA-type" evidence="2">
    <location>
        <begin position="22"/>
        <end position="76"/>
    </location>
</feature>
<feature type="sequence conflict" description="In Ref. 5; AAM63829." evidence="3" ref="5">
    <original>V</original>
    <variation>M</variation>
    <location>
        <position position="16"/>
    </location>
</feature>
<gene>
    <name type="primary">GATA23</name>
    <name type="ordered locus">At5g26930</name>
    <name type="ORF">F2P16.190</name>
    <name type="ORF">F2P16.9</name>
</gene>
<proteinExistence type="evidence at transcript level"/>
<dbReference type="EMBL" id="AF007270">
    <property type="protein sequence ID" value="AAB61058.1"/>
    <property type="status" value="ALT_SEQ"/>
    <property type="molecule type" value="Genomic_DNA"/>
</dbReference>
<dbReference type="EMBL" id="CP002688">
    <property type="protein sequence ID" value="AED93628.1"/>
    <property type="molecule type" value="Genomic_DNA"/>
</dbReference>
<dbReference type="EMBL" id="DQ446989">
    <property type="protein sequence ID" value="ABE66183.1"/>
    <property type="molecule type" value="mRNA"/>
</dbReference>
<dbReference type="EMBL" id="DQ653310">
    <property type="protein sequence ID" value="ABK28715.1"/>
    <property type="status" value="ALT_SEQ"/>
    <property type="molecule type" value="mRNA"/>
</dbReference>
<dbReference type="EMBL" id="BT024789">
    <property type="protein sequence ID" value="ABD59127.1"/>
    <property type="molecule type" value="mRNA"/>
</dbReference>
<dbReference type="EMBL" id="AY086778">
    <property type="protein sequence ID" value="AAM63829.1"/>
    <property type="molecule type" value="mRNA"/>
</dbReference>
<dbReference type="PIR" id="T01770">
    <property type="entry name" value="T01770"/>
</dbReference>
<dbReference type="RefSeq" id="NP_198045.1">
    <property type="nucleotide sequence ID" value="NM_122575.3"/>
</dbReference>
<dbReference type="SMR" id="Q8LC59"/>
<dbReference type="BioGRID" id="18026">
    <property type="interactions" value="3"/>
</dbReference>
<dbReference type="IntAct" id="Q8LC59">
    <property type="interactions" value="3"/>
</dbReference>
<dbReference type="STRING" id="3702.Q8LC59"/>
<dbReference type="GlyGen" id="Q8LC59">
    <property type="glycosylation" value="1 site"/>
</dbReference>
<dbReference type="PaxDb" id="3702-AT5G26930.1"/>
<dbReference type="EnsemblPlants" id="AT5G26930.1">
    <property type="protein sequence ID" value="AT5G26930.1"/>
    <property type="gene ID" value="AT5G26930"/>
</dbReference>
<dbReference type="GeneID" id="832751"/>
<dbReference type="Gramene" id="AT5G26930.1">
    <property type="protein sequence ID" value="AT5G26930.1"/>
    <property type="gene ID" value="AT5G26930"/>
</dbReference>
<dbReference type="KEGG" id="ath:AT5G26930"/>
<dbReference type="Araport" id="AT5G26930"/>
<dbReference type="TAIR" id="AT5G26930">
    <property type="gene designation" value="GATA23"/>
</dbReference>
<dbReference type="eggNOG" id="KOG1601">
    <property type="taxonomic scope" value="Eukaryota"/>
</dbReference>
<dbReference type="HOGENOM" id="CLU_060197_3_0_1"/>
<dbReference type="InParanoid" id="Q8LC59"/>
<dbReference type="OMA" id="HTHKAYK"/>
<dbReference type="PhylomeDB" id="Q8LC59"/>
<dbReference type="PRO" id="PR:Q8LC59"/>
<dbReference type="Proteomes" id="UP000006548">
    <property type="component" value="Chromosome 5"/>
</dbReference>
<dbReference type="ExpressionAtlas" id="Q8LC59">
    <property type="expression patterns" value="baseline and differential"/>
</dbReference>
<dbReference type="GO" id="GO:0005634">
    <property type="term" value="C:nucleus"/>
    <property type="evidence" value="ECO:0007669"/>
    <property type="project" value="UniProtKB-SubCell"/>
</dbReference>
<dbReference type="GO" id="GO:0000976">
    <property type="term" value="F:transcription cis-regulatory region binding"/>
    <property type="evidence" value="ECO:0000353"/>
    <property type="project" value="TAIR"/>
</dbReference>
<dbReference type="GO" id="GO:0008270">
    <property type="term" value="F:zinc ion binding"/>
    <property type="evidence" value="ECO:0007669"/>
    <property type="project" value="UniProtKB-KW"/>
</dbReference>
<dbReference type="GO" id="GO:0048527">
    <property type="term" value="P:lateral root development"/>
    <property type="evidence" value="ECO:0000315"/>
    <property type="project" value="TAIR"/>
</dbReference>
<dbReference type="GO" id="GO:0006355">
    <property type="term" value="P:regulation of DNA-templated transcription"/>
    <property type="evidence" value="ECO:0007669"/>
    <property type="project" value="InterPro"/>
</dbReference>
<dbReference type="GO" id="GO:0009416">
    <property type="term" value="P:response to light stimulus"/>
    <property type="evidence" value="ECO:0000270"/>
    <property type="project" value="TAIR"/>
</dbReference>
<dbReference type="CDD" id="cd00202">
    <property type="entry name" value="ZnF_GATA"/>
    <property type="match status" value="1"/>
</dbReference>
<dbReference type="FunFam" id="3.30.50.10:FF:000055">
    <property type="entry name" value="GATA transcription factor 21"/>
    <property type="match status" value="1"/>
</dbReference>
<dbReference type="Gene3D" id="3.30.50.10">
    <property type="entry name" value="Erythroid Transcription Factor GATA-1, subunit A"/>
    <property type="match status" value="1"/>
</dbReference>
<dbReference type="InterPro" id="IPR000679">
    <property type="entry name" value="Znf_GATA"/>
</dbReference>
<dbReference type="InterPro" id="IPR013088">
    <property type="entry name" value="Znf_NHR/GATA"/>
</dbReference>
<dbReference type="PANTHER" id="PTHR47172:SF9">
    <property type="entry name" value="GATA TRANSCRIPTION FACTOR 23"/>
    <property type="match status" value="1"/>
</dbReference>
<dbReference type="PANTHER" id="PTHR47172">
    <property type="entry name" value="OS01G0976800 PROTEIN"/>
    <property type="match status" value="1"/>
</dbReference>
<dbReference type="Pfam" id="PF00320">
    <property type="entry name" value="GATA"/>
    <property type="match status" value="1"/>
</dbReference>
<dbReference type="SMART" id="SM00401">
    <property type="entry name" value="ZnF_GATA"/>
    <property type="match status" value="1"/>
</dbReference>
<dbReference type="SUPFAM" id="SSF57716">
    <property type="entry name" value="Glucocorticoid receptor-like (DNA-binding domain)"/>
    <property type="match status" value="1"/>
</dbReference>
<dbReference type="PROSITE" id="PS00344">
    <property type="entry name" value="GATA_ZN_FINGER_1"/>
    <property type="match status" value="1"/>
</dbReference>
<dbReference type="PROSITE" id="PS50114">
    <property type="entry name" value="GATA_ZN_FINGER_2"/>
    <property type="match status" value="1"/>
</dbReference>
<comment type="function">
    <text evidence="1">Transcriptional regulator that specifically binds 5'-GATA-3' or 5'-GAT-3' motifs within gene promoters.</text>
</comment>
<comment type="subcellular location">
    <subcellularLocation>
        <location evidence="3">Nucleus</location>
    </subcellularLocation>
</comment>
<comment type="similarity">
    <text evidence="3">Belongs to the type IV zinc-finger family. Class B subfamily.</text>
</comment>
<comment type="sequence caution" evidence="3">
    <conflict type="erroneous gene model prediction">
        <sequence resource="EMBL-CDS" id="AAB61058"/>
    </conflict>
</comment>
<comment type="sequence caution" evidence="3">
    <conflict type="erroneous termination">
        <sequence resource="EMBL-CDS" id="ABK28715"/>
    </conflict>
    <text>Extended C-terminus.</text>
</comment>
<accession>Q8LC59</accession>
<accession>A0MFI4</accession>
<accession>O04636</accession>
<accession>Q29PW7</accession>
<evidence type="ECO:0000250" key="1"/>
<evidence type="ECO:0000255" key="2">
    <source>
        <dbReference type="PROSITE-ProRule" id="PRU00094"/>
    </source>
</evidence>
<evidence type="ECO:0000305" key="3"/>
<sequence>MDPRKLLSCSSSYVSVRMKEEKGTIRCCSECKTTKTPMWRGGPTGPKSLCNACGIRHRKQRRSELLGIHIIRSHKSLASKKINLLSSSHGGVAVKKRRSLKEEEQAALCLLLLSCSSVLA</sequence>
<keyword id="KW-0238">DNA-binding</keyword>
<keyword id="KW-0479">Metal-binding</keyword>
<keyword id="KW-0539">Nucleus</keyword>
<keyword id="KW-1185">Reference proteome</keyword>
<keyword id="KW-0804">Transcription</keyword>
<keyword id="KW-0805">Transcription regulation</keyword>
<keyword id="KW-0862">Zinc</keyword>
<keyword id="KW-0863">Zinc-finger</keyword>
<organism>
    <name type="scientific">Arabidopsis thaliana</name>
    <name type="common">Mouse-ear cress</name>
    <dbReference type="NCBI Taxonomy" id="3702"/>
    <lineage>
        <taxon>Eukaryota</taxon>
        <taxon>Viridiplantae</taxon>
        <taxon>Streptophyta</taxon>
        <taxon>Embryophyta</taxon>
        <taxon>Tracheophyta</taxon>
        <taxon>Spermatophyta</taxon>
        <taxon>Magnoliopsida</taxon>
        <taxon>eudicotyledons</taxon>
        <taxon>Gunneridae</taxon>
        <taxon>Pentapetalae</taxon>
        <taxon>rosids</taxon>
        <taxon>malvids</taxon>
        <taxon>Brassicales</taxon>
        <taxon>Brassicaceae</taxon>
        <taxon>Camelineae</taxon>
        <taxon>Arabidopsis</taxon>
    </lineage>
</organism>